<name>RPIA_SALAR</name>
<protein>
    <recommendedName>
        <fullName evidence="1">Ribose-5-phosphate isomerase A</fullName>
        <ecNumber evidence="1">5.3.1.6</ecNumber>
    </recommendedName>
    <alternativeName>
        <fullName evidence="1">Phosphoriboisomerase A</fullName>
        <shortName evidence="1">PRI</shortName>
    </alternativeName>
</protein>
<feature type="chain" id="PRO_1000077075" description="Ribose-5-phosphate isomerase A">
    <location>
        <begin position="1"/>
        <end position="219"/>
    </location>
</feature>
<feature type="active site" description="Proton acceptor" evidence="1">
    <location>
        <position position="103"/>
    </location>
</feature>
<feature type="binding site" evidence="1">
    <location>
        <begin position="28"/>
        <end position="31"/>
    </location>
    <ligand>
        <name>substrate</name>
    </ligand>
</feature>
<feature type="binding site" evidence="1">
    <location>
        <begin position="81"/>
        <end position="84"/>
    </location>
    <ligand>
        <name>substrate</name>
    </ligand>
</feature>
<feature type="binding site" evidence="1">
    <location>
        <begin position="94"/>
        <end position="97"/>
    </location>
    <ligand>
        <name>substrate</name>
    </ligand>
</feature>
<feature type="binding site" evidence="1">
    <location>
        <position position="121"/>
    </location>
    <ligand>
        <name>substrate</name>
    </ligand>
</feature>
<gene>
    <name evidence="1" type="primary">rpiA</name>
    <name type="ordered locus">SARI_04587</name>
</gene>
<reference key="1">
    <citation type="submission" date="2007-11" db="EMBL/GenBank/DDBJ databases">
        <authorList>
            <consortium name="The Salmonella enterica serovar Arizonae Genome Sequencing Project"/>
            <person name="McClelland M."/>
            <person name="Sanderson E.K."/>
            <person name="Porwollik S."/>
            <person name="Spieth J."/>
            <person name="Clifton W.S."/>
            <person name="Fulton R."/>
            <person name="Chunyan W."/>
            <person name="Wollam A."/>
            <person name="Shah N."/>
            <person name="Pepin K."/>
            <person name="Bhonagiri V."/>
            <person name="Nash W."/>
            <person name="Johnson M."/>
            <person name="Thiruvilangam P."/>
            <person name="Wilson R."/>
        </authorList>
    </citation>
    <scope>NUCLEOTIDE SEQUENCE [LARGE SCALE GENOMIC DNA]</scope>
    <source>
        <strain>ATCC BAA-731 / CDC346-86 / RSK2980</strain>
    </source>
</reference>
<accession>A9MRG2</accession>
<proteinExistence type="inferred from homology"/>
<sequence length="219" mass="22838">MTQDELKKAVGWAALQYVQPGTIVGVGTGSTAAHFIDALGTMKGQIEGAVSSSDASTEKLKGLGIHVFDLNEVDSLGIYVDGADEINGHMQMIKGGGAALTREKIIASVAEKFICIADASKQVDILGKFPLPVEVIPMARSAVARQLVKLGGRPEYRQGVVTDNGNVILDVYGMEILDPIALENAINAIPGVVTVGLFANRGADVALIGTPDGVKTIVK</sequence>
<evidence type="ECO:0000255" key="1">
    <source>
        <dbReference type="HAMAP-Rule" id="MF_00170"/>
    </source>
</evidence>
<keyword id="KW-0413">Isomerase</keyword>
<keyword id="KW-1185">Reference proteome</keyword>
<comment type="function">
    <text evidence="1">Catalyzes the reversible conversion of ribose-5-phosphate to ribulose 5-phosphate.</text>
</comment>
<comment type="catalytic activity">
    <reaction evidence="1">
        <text>aldehydo-D-ribose 5-phosphate = D-ribulose 5-phosphate</text>
        <dbReference type="Rhea" id="RHEA:14657"/>
        <dbReference type="ChEBI" id="CHEBI:58121"/>
        <dbReference type="ChEBI" id="CHEBI:58273"/>
        <dbReference type="EC" id="5.3.1.6"/>
    </reaction>
</comment>
<comment type="pathway">
    <text evidence="1">Carbohydrate degradation; pentose phosphate pathway; D-ribose 5-phosphate from D-ribulose 5-phosphate (non-oxidative stage): step 1/1.</text>
</comment>
<comment type="subunit">
    <text evidence="1">Homodimer.</text>
</comment>
<comment type="similarity">
    <text evidence="1">Belongs to the ribose 5-phosphate isomerase family.</text>
</comment>
<organism>
    <name type="scientific">Salmonella arizonae (strain ATCC BAA-731 / CDC346-86 / RSK2980)</name>
    <dbReference type="NCBI Taxonomy" id="41514"/>
    <lineage>
        <taxon>Bacteria</taxon>
        <taxon>Pseudomonadati</taxon>
        <taxon>Pseudomonadota</taxon>
        <taxon>Gammaproteobacteria</taxon>
        <taxon>Enterobacterales</taxon>
        <taxon>Enterobacteriaceae</taxon>
        <taxon>Salmonella</taxon>
    </lineage>
</organism>
<dbReference type="EC" id="5.3.1.6" evidence="1"/>
<dbReference type="EMBL" id="CP000880">
    <property type="protein sequence ID" value="ABX24360.1"/>
    <property type="molecule type" value="Genomic_DNA"/>
</dbReference>
<dbReference type="SMR" id="A9MRG2"/>
<dbReference type="STRING" id="41514.SARI_04587"/>
<dbReference type="KEGG" id="ses:SARI_04587"/>
<dbReference type="HOGENOM" id="CLU_056590_1_1_6"/>
<dbReference type="UniPathway" id="UPA00115">
    <property type="reaction ID" value="UER00412"/>
</dbReference>
<dbReference type="Proteomes" id="UP000002084">
    <property type="component" value="Chromosome"/>
</dbReference>
<dbReference type="GO" id="GO:0005829">
    <property type="term" value="C:cytosol"/>
    <property type="evidence" value="ECO:0007669"/>
    <property type="project" value="TreeGrafter"/>
</dbReference>
<dbReference type="GO" id="GO:0004751">
    <property type="term" value="F:ribose-5-phosphate isomerase activity"/>
    <property type="evidence" value="ECO:0007669"/>
    <property type="project" value="UniProtKB-UniRule"/>
</dbReference>
<dbReference type="GO" id="GO:0006014">
    <property type="term" value="P:D-ribose metabolic process"/>
    <property type="evidence" value="ECO:0007669"/>
    <property type="project" value="TreeGrafter"/>
</dbReference>
<dbReference type="GO" id="GO:0009052">
    <property type="term" value="P:pentose-phosphate shunt, non-oxidative branch"/>
    <property type="evidence" value="ECO:0007669"/>
    <property type="project" value="UniProtKB-UniRule"/>
</dbReference>
<dbReference type="CDD" id="cd01398">
    <property type="entry name" value="RPI_A"/>
    <property type="match status" value="1"/>
</dbReference>
<dbReference type="FunFam" id="3.30.70.260:FF:000004">
    <property type="entry name" value="Ribose-5-phosphate isomerase A"/>
    <property type="match status" value="1"/>
</dbReference>
<dbReference type="FunFam" id="3.40.50.1360:FF:000001">
    <property type="entry name" value="Ribose-5-phosphate isomerase A"/>
    <property type="match status" value="1"/>
</dbReference>
<dbReference type="Gene3D" id="3.30.70.260">
    <property type="match status" value="1"/>
</dbReference>
<dbReference type="Gene3D" id="3.40.50.1360">
    <property type="match status" value="1"/>
</dbReference>
<dbReference type="HAMAP" id="MF_00170">
    <property type="entry name" value="Rib_5P_isom_A"/>
    <property type="match status" value="1"/>
</dbReference>
<dbReference type="InterPro" id="IPR037171">
    <property type="entry name" value="NagB/RpiA_transferase-like"/>
</dbReference>
<dbReference type="InterPro" id="IPR020672">
    <property type="entry name" value="Ribose5P_isomerase_typA_subgr"/>
</dbReference>
<dbReference type="InterPro" id="IPR004788">
    <property type="entry name" value="Ribose5P_isomerase_type_A"/>
</dbReference>
<dbReference type="NCBIfam" id="NF001924">
    <property type="entry name" value="PRK00702.1"/>
    <property type="match status" value="1"/>
</dbReference>
<dbReference type="NCBIfam" id="TIGR00021">
    <property type="entry name" value="rpiA"/>
    <property type="match status" value="1"/>
</dbReference>
<dbReference type="PANTHER" id="PTHR11934">
    <property type="entry name" value="RIBOSE-5-PHOSPHATE ISOMERASE"/>
    <property type="match status" value="1"/>
</dbReference>
<dbReference type="PANTHER" id="PTHR11934:SF0">
    <property type="entry name" value="RIBOSE-5-PHOSPHATE ISOMERASE"/>
    <property type="match status" value="1"/>
</dbReference>
<dbReference type="Pfam" id="PF06026">
    <property type="entry name" value="Rib_5-P_isom_A"/>
    <property type="match status" value="1"/>
</dbReference>
<dbReference type="SUPFAM" id="SSF75445">
    <property type="entry name" value="D-ribose-5-phosphate isomerase (RpiA), lid domain"/>
    <property type="match status" value="1"/>
</dbReference>
<dbReference type="SUPFAM" id="SSF100950">
    <property type="entry name" value="NagB/RpiA/CoA transferase-like"/>
    <property type="match status" value="1"/>
</dbReference>